<reference key="1">
    <citation type="journal article" date="1998" name="Eur. J. Immunol.">
        <title>Cloning of two members of the SIRP alpha family of protein tyrosine phosphatase binding proteins in cattle that are expressed on monocytes and a subpopulation of dendritic cells and which mediate binding to CD4 T cells.</title>
        <authorList>
            <person name="Brooke G.P."/>
            <person name="Parsons K.R."/>
            <person name="Howard C.J."/>
        </authorList>
    </citation>
    <scope>NUCLEOTIDE SEQUENCE [MRNA]</scope>
    <scope>VARIANTS SER-23; ALA-28; LEU-61; ARG-70; HIS-120; GLN-125; GLY-127; HIS-129; VAL-132; ASN-145; VAL-153; ASP-203; ARG-261; LEU-302; LEU-316; ARG-337; ASN-367; LEU-422; PHE-429 AND GLU-433</scope>
    <source>
        <strain>Friesian</strain>
        <tissue>Peripheral blood</tissue>
    </source>
</reference>
<protein>
    <recommendedName>
        <fullName>Tyrosine-protein phosphatase non-receptor type substrate 1</fullName>
        <shortName>SHP substrate 1</shortName>
        <shortName>SHPS-1</shortName>
    </recommendedName>
    <alternativeName>
        <fullName>CD172 antigen-like family member A</fullName>
    </alternativeName>
    <alternativeName>
        <fullName>Inhibitory receptor SHPS-1</fullName>
    </alternativeName>
    <alternativeName>
        <fullName>MyD-1 antigen</fullName>
    </alternativeName>
    <alternativeName>
        <fullName>Signal-regulatory protein alpha-1</fullName>
        <shortName>Sirp-alpha-1</shortName>
    </alternativeName>
    <cdAntigenName>CD172a</cdAntigenName>
</protein>
<name>SHPS1_BOVIN</name>
<keyword id="KW-1015">Disulfide bond</keyword>
<keyword id="KW-0325">Glycoprotein</keyword>
<keyword id="KW-0393">Immunoglobulin domain</keyword>
<keyword id="KW-0472">Membrane</keyword>
<keyword id="KW-0597">Phosphoprotein</keyword>
<keyword id="KW-1185">Reference proteome</keyword>
<keyword id="KW-0677">Repeat</keyword>
<keyword id="KW-0729">SH3-binding</keyword>
<keyword id="KW-0732">Signal</keyword>
<keyword id="KW-0812">Transmembrane</keyword>
<keyword id="KW-1133">Transmembrane helix</keyword>
<gene>
    <name type="primary">SIRPA</name>
    <name type="synonym">MYD1</name>
    <name type="synonym">PTPNS1</name>
    <name type="synonym">SHPS1</name>
    <name type="synonym">SIRP</name>
</gene>
<sequence length="506" mass="55093">MEPARPAPGRLRPLLCLLLAASNAWTGTAGDGELQVIQPERSVSVAAGETATLHCTVTSLSPVGPIKWFKGTGPGREFIYSQKEAPFPRVTNVSDATKRNNMDFSIRISNITPADAGVYYCVKFRKEERGDMEFKSGPGTHLTVSAKPSPPVLSGPTVRATPEQTVNFTCTSHGFSPRNISLKWFKNGNELSASQTSVDPEDNNVSYSINSTTKVLLATGDVHSQVICEVAHVTLQGGPPLRGTANLSETIRVPPTLEITGSPSAGNQVNVTCQVNKFYPRHLQLTWLENGNMSRTEAASVFVENKDGTFNQTSWFLVNSSAHREAVVLTCQVEHDGQPAVSKNHTLEVSAPQKDQDTGQTPGPNDSNWTSIFIVVGVVCALLVALLIAALYLLRIRQNKAKGSTSSTRLHEPEKNTRETTQIQDNNDITYADLNLPKGKKSTPKANEPNNHTEYASIQARPPPVSEDTLTYADLDMVHLNRTPKQPAPKPEPSYSEYASVQVQRK</sequence>
<organism>
    <name type="scientific">Bos taurus</name>
    <name type="common">Bovine</name>
    <dbReference type="NCBI Taxonomy" id="9913"/>
    <lineage>
        <taxon>Eukaryota</taxon>
        <taxon>Metazoa</taxon>
        <taxon>Chordata</taxon>
        <taxon>Craniata</taxon>
        <taxon>Vertebrata</taxon>
        <taxon>Euteleostomi</taxon>
        <taxon>Mammalia</taxon>
        <taxon>Eutheria</taxon>
        <taxon>Laurasiatheria</taxon>
        <taxon>Artiodactyla</taxon>
        <taxon>Ruminantia</taxon>
        <taxon>Pecora</taxon>
        <taxon>Bovidae</taxon>
        <taxon>Bovinae</taxon>
        <taxon>Bos</taxon>
    </lineage>
</organism>
<evidence type="ECO:0000250" key="1"/>
<evidence type="ECO:0000250" key="2">
    <source>
        <dbReference type="UniProtKB" id="P78324"/>
    </source>
</evidence>
<evidence type="ECO:0000250" key="3">
    <source>
        <dbReference type="UniProtKB" id="P97710"/>
    </source>
</evidence>
<evidence type="ECO:0000250" key="4">
    <source>
        <dbReference type="UniProtKB" id="P97797"/>
    </source>
</evidence>
<evidence type="ECO:0000255" key="5"/>
<evidence type="ECO:0000255" key="6">
    <source>
        <dbReference type="PROSITE-ProRule" id="PRU00114"/>
    </source>
</evidence>
<evidence type="ECO:0000256" key="7">
    <source>
        <dbReference type="SAM" id="MobiDB-lite"/>
    </source>
</evidence>
<evidence type="ECO:0000269" key="8">
    <source>
    </source>
</evidence>
<dbReference type="EMBL" id="Y11045">
    <property type="protein sequence ID" value="CAA71942.1"/>
    <property type="molecule type" value="mRNA"/>
</dbReference>
<dbReference type="EMBL" id="Y11046">
    <property type="protein sequence ID" value="CAA71943.1"/>
    <property type="molecule type" value="mRNA"/>
</dbReference>
<dbReference type="RefSeq" id="NP_786982.1">
    <property type="nucleotide sequence ID" value="NM_175788.1"/>
</dbReference>
<dbReference type="SMR" id="O46631"/>
<dbReference type="FunCoup" id="O46631">
    <property type="interactions" value="724"/>
</dbReference>
<dbReference type="STRING" id="9913.ENSBTAP00000009488"/>
<dbReference type="GlyCosmos" id="O46631">
    <property type="glycosylation" value="13 sites, No reported glycans"/>
</dbReference>
<dbReference type="GlyGen" id="O46631">
    <property type="glycosylation" value="13 sites"/>
</dbReference>
<dbReference type="PaxDb" id="9913-ENSBTAP00000009488"/>
<dbReference type="GeneID" id="327666"/>
<dbReference type="KEGG" id="bta:327666"/>
<dbReference type="CTD" id="140885"/>
<dbReference type="eggNOG" id="ENOG502S1XD">
    <property type="taxonomic scope" value="Eukaryota"/>
</dbReference>
<dbReference type="InParanoid" id="O46631"/>
<dbReference type="OrthoDB" id="6370831at2759"/>
<dbReference type="Proteomes" id="UP000009136">
    <property type="component" value="Unplaced"/>
</dbReference>
<dbReference type="GO" id="GO:0005886">
    <property type="term" value="C:plasma membrane"/>
    <property type="evidence" value="ECO:0000318"/>
    <property type="project" value="GO_Central"/>
</dbReference>
<dbReference type="GO" id="GO:0017124">
    <property type="term" value="F:SH3 domain binding"/>
    <property type="evidence" value="ECO:0007669"/>
    <property type="project" value="UniProtKB-KW"/>
</dbReference>
<dbReference type="GO" id="GO:0050766">
    <property type="term" value="P:positive regulation of phagocytosis"/>
    <property type="evidence" value="ECO:0000318"/>
    <property type="project" value="GO_Central"/>
</dbReference>
<dbReference type="GO" id="GO:0050870">
    <property type="term" value="P:positive regulation of T cell activation"/>
    <property type="evidence" value="ECO:0000318"/>
    <property type="project" value="GO_Central"/>
</dbReference>
<dbReference type="CDD" id="cd05772">
    <property type="entry name" value="IgC1_SIRP_domain_2"/>
    <property type="match status" value="1"/>
</dbReference>
<dbReference type="CDD" id="cd16085">
    <property type="entry name" value="IgC1_SIRP_domain_3"/>
    <property type="match status" value="1"/>
</dbReference>
<dbReference type="CDD" id="cd16097">
    <property type="entry name" value="IgV_SIRP"/>
    <property type="match status" value="1"/>
</dbReference>
<dbReference type="FunFam" id="2.60.40.10:FF:000490">
    <property type="entry name" value="Signal-regulatory protein beta 1"/>
    <property type="match status" value="1"/>
</dbReference>
<dbReference type="FunFam" id="2.60.40.10:FF:000295">
    <property type="entry name" value="Tyrosine-protein phosphatase non-receptor type substrate 1"/>
    <property type="match status" value="1"/>
</dbReference>
<dbReference type="FunFam" id="2.60.40.10:FF:000454">
    <property type="entry name" value="Tyrosine-protein phosphatase non-receptor type substrate 1"/>
    <property type="match status" value="1"/>
</dbReference>
<dbReference type="Gene3D" id="2.60.40.10">
    <property type="entry name" value="Immunoglobulins"/>
    <property type="match status" value="3"/>
</dbReference>
<dbReference type="InterPro" id="IPR051755">
    <property type="entry name" value="Ig-like_CS_Receptor"/>
</dbReference>
<dbReference type="InterPro" id="IPR007110">
    <property type="entry name" value="Ig-like_dom"/>
</dbReference>
<dbReference type="InterPro" id="IPR036179">
    <property type="entry name" value="Ig-like_dom_sf"/>
</dbReference>
<dbReference type="InterPro" id="IPR013783">
    <property type="entry name" value="Ig-like_fold"/>
</dbReference>
<dbReference type="InterPro" id="IPR003597">
    <property type="entry name" value="Ig_C1-set"/>
</dbReference>
<dbReference type="InterPro" id="IPR003599">
    <property type="entry name" value="Ig_sub"/>
</dbReference>
<dbReference type="InterPro" id="IPR013106">
    <property type="entry name" value="Ig_V-set"/>
</dbReference>
<dbReference type="PANTHER" id="PTHR19971">
    <property type="entry name" value="SIGNAL-REGULATORY PROTEIN BETA"/>
    <property type="match status" value="1"/>
</dbReference>
<dbReference type="Pfam" id="PF07654">
    <property type="entry name" value="C1-set"/>
    <property type="match status" value="2"/>
</dbReference>
<dbReference type="Pfam" id="PF07686">
    <property type="entry name" value="V-set"/>
    <property type="match status" value="1"/>
</dbReference>
<dbReference type="SMART" id="SM00409">
    <property type="entry name" value="IG"/>
    <property type="match status" value="2"/>
</dbReference>
<dbReference type="SMART" id="SM00407">
    <property type="entry name" value="IGc1"/>
    <property type="match status" value="2"/>
</dbReference>
<dbReference type="SMART" id="SM00406">
    <property type="entry name" value="IGv"/>
    <property type="match status" value="1"/>
</dbReference>
<dbReference type="SUPFAM" id="SSF48726">
    <property type="entry name" value="Immunoglobulin"/>
    <property type="match status" value="3"/>
</dbReference>
<dbReference type="PROSITE" id="PS50835">
    <property type="entry name" value="IG_LIKE"/>
    <property type="match status" value="3"/>
</dbReference>
<feature type="signal peptide" evidence="5">
    <location>
        <begin position="1"/>
        <end position="29"/>
    </location>
</feature>
<feature type="chain" id="PRO_0000014940" description="Tyrosine-protein phosphatase non-receptor type substrate 1">
    <location>
        <begin position="30"/>
        <end position="506"/>
    </location>
</feature>
<feature type="topological domain" description="Extracellular" evidence="5">
    <location>
        <begin position="30"/>
        <end position="371"/>
    </location>
</feature>
<feature type="transmembrane region" description="Helical" evidence="5">
    <location>
        <begin position="372"/>
        <end position="392"/>
    </location>
</feature>
<feature type="topological domain" description="Cytoplasmic" evidence="5">
    <location>
        <begin position="393"/>
        <end position="506"/>
    </location>
</feature>
<feature type="domain" description="Ig-like V-type">
    <location>
        <begin position="30"/>
        <end position="145"/>
    </location>
</feature>
<feature type="domain" description="Ig-like C1-type 1">
    <location>
        <begin position="148"/>
        <end position="248"/>
    </location>
</feature>
<feature type="domain" description="Ig-like C1-type 2">
    <location>
        <begin position="255"/>
        <end position="348"/>
    </location>
</feature>
<feature type="region of interest" description="Disordered" evidence="7">
    <location>
        <begin position="136"/>
        <end position="159"/>
    </location>
</feature>
<feature type="region of interest" description="Disordered" evidence="7">
    <location>
        <begin position="344"/>
        <end position="364"/>
    </location>
</feature>
<feature type="region of interest" description="Disordered" evidence="7">
    <location>
        <begin position="402"/>
        <end position="468"/>
    </location>
</feature>
<feature type="region of interest" description="Disordered" evidence="7">
    <location>
        <begin position="480"/>
        <end position="506"/>
    </location>
</feature>
<feature type="short sequence motif" description="SH2-binding" evidence="5">
    <location>
        <begin position="432"/>
        <end position="435"/>
    </location>
</feature>
<feature type="short sequence motif" description="SH3-binding" evidence="5">
    <location>
        <begin position="441"/>
        <end position="446"/>
    </location>
</feature>
<feature type="short sequence motif" description="SH2-binding" evidence="5">
    <location>
        <begin position="455"/>
        <end position="458"/>
    </location>
</feature>
<feature type="short sequence motif" description="SH2-binding" evidence="5">
    <location>
        <begin position="472"/>
        <end position="475"/>
    </location>
</feature>
<feature type="short sequence motif" description="SH2-binding" evidence="5">
    <location>
        <begin position="498"/>
        <end position="501"/>
    </location>
</feature>
<feature type="compositionally biased region" description="Basic and acidic residues" evidence="7">
    <location>
        <begin position="409"/>
        <end position="418"/>
    </location>
</feature>
<feature type="compositionally biased region" description="Polar residues" evidence="7">
    <location>
        <begin position="419"/>
        <end position="429"/>
    </location>
</feature>
<feature type="compositionally biased region" description="Polar residues" evidence="7">
    <location>
        <begin position="444"/>
        <end position="456"/>
    </location>
</feature>
<feature type="compositionally biased region" description="Polar residues" evidence="7">
    <location>
        <begin position="497"/>
        <end position="506"/>
    </location>
</feature>
<feature type="modified residue" description="Phosphotyrosine; by Tyr-kinases" evidence="5">
    <location>
        <position position="431"/>
    </location>
</feature>
<feature type="modified residue" description="Phosphotyrosine; by Tyr-kinases" evidence="5">
    <location>
        <position position="455"/>
    </location>
</feature>
<feature type="modified residue" description="Phosphotyrosine; by Tyr-kinases" evidence="3">
    <location>
        <position position="472"/>
    </location>
</feature>
<feature type="modified residue" description="Phosphotyrosine; by Tyr-kinases" evidence="3">
    <location>
        <position position="498"/>
    </location>
</feature>
<feature type="glycosylation site" description="N-linked (GlcNAc...) asparagine" evidence="5">
    <location>
        <position position="92"/>
    </location>
</feature>
<feature type="glycosylation site" description="N-linked (GlcNAc...) asparagine" evidence="5">
    <location>
        <position position="167"/>
    </location>
</feature>
<feature type="glycosylation site" description="N-linked (GlcNAc...) asparagine" evidence="5">
    <location>
        <position position="179"/>
    </location>
</feature>
<feature type="glycosylation site" description="N-linked (GlcNAc...) asparagine" evidence="5">
    <location>
        <position position="204"/>
    </location>
</feature>
<feature type="glycosylation site" description="N-linked (GlcNAc...) asparagine" evidence="5">
    <location>
        <position position="210"/>
    </location>
</feature>
<feature type="glycosylation site" description="N-linked (GlcNAc...) asparagine" evidence="5">
    <location>
        <position position="246"/>
    </location>
</feature>
<feature type="glycosylation site" description="N-linked (GlcNAc...) asparagine" evidence="5">
    <location>
        <position position="270"/>
    </location>
</feature>
<feature type="glycosylation site" description="N-linked (GlcNAc...) asparagine" evidence="5">
    <location>
        <position position="292"/>
    </location>
</feature>
<feature type="glycosylation site" description="N-linked (GlcNAc...) asparagine" evidence="5">
    <location>
        <position position="311"/>
    </location>
</feature>
<feature type="glycosylation site" description="N-linked (GlcNAc...) asparagine" evidence="5">
    <location>
        <position position="319"/>
    </location>
</feature>
<feature type="glycosylation site" description="N-linked (GlcNAc...) asparagine" evidence="5">
    <location>
        <position position="344"/>
    </location>
</feature>
<feature type="glycosylation site" description="N-linked (GlcNAc...) asparagine" evidence="5">
    <location>
        <position position="365"/>
    </location>
</feature>
<feature type="glycosylation site" description="N-linked (GlcNAc...) asparagine" evidence="5">
    <location>
        <position position="368"/>
    </location>
</feature>
<feature type="disulfide bond" evidence="6">
    <location>
        <begin position="55"/>
        <end position="121"/>
    </location>
</feature>
<feature type="disulfide bond" evidence="6">
    <location>
        <begin position="170"/>
        <end position="228"/>
    </location>
</feature>
<feature type="disulfide bond" evidence="6">
    <location>
        <begin position="273"/>
        <end position="331"/>
    </location>
</feature>
<feature type="sequence variant" evidence="8">
    <original>N</original>
    <variation>S</variation>
    <location>
        <position position="23"/>
    </location>
</feature>
<feature type="sequence variant" evidence="8">
    <original>T</original>
    <variation>A</variation>
    <location>
        <position position="28"/>
    </location>
</feature>
<feature type="sequence variant" evidence="8">
    <original>S</original>
    <variation>L</variation>
    <location>
        <position position="61"/>
    </location>
</feature>
<feature type="sequence variant" evidence="8">
    <original>K</original>
    <variation>R</variation>
    <location>
        <position position="70"/>
    </location>
</feature>
<feature type="sequence variant" evidence="8">
    <original>Y</original>
    <variation>H</variation>
    <location>
        <position position="120"/>
    </location>
</feature>
<feature type="sequence variant" evidence="8">
    <original>R</original>
    <variation>Q</variation>
    <location>
        <position position="125"/>
    </location>
</feature>
<feature type="sequence variant" evidence="8">
    <original>E</original>
    <variation>G</variation>
    <location>
        <position position="127"/>
    </location>
</feature>
<feature type="sequence variant" evidence="8">
    <original>R</original>
    <variation>H</variation>
    <location>
        <position position="129"/>
    </location>
</feature>
<feature type="sequence variant" evidence="8">
    <original>M</original>
    <variation>V</variation>
    <location>
        <position position="132"/>
    </location>
</feature>
<feature type="sequence variant" evidence="8">
    <original>S</original>
    <variation>N</variation>
    <location>
        <position position="145"/>
    </location>
</feature>
<feature type="sequence variant" evidence="8">
    <original>L</original>
    <variation>V</variation>
    <location>
        <position position="153"/>
    </location>
</feature>
<feature type="sequence variant" evidence="8">
    <original>N</original>
    <variation>D</variation>
    <location>
        <position position="203"/>
    </location>
</feature>
<feature type="sequence variant" evidence="8">
    <original>G</original>
    <variation>R</variation>
    <location>
        <position position="261"/>
    </location>
</feature>
<feature type="sequence variant" evidence="8">
    <original>F</original>
    <variation>L</variation>
    <location>
        <position position="302"/>
    </location>
</feature>
<feature type="sequence variant" evidence="8">
    <original>F</original>
    <variation>L</variation>
    <location>
        <position position="316"/>
    </location>
</feature>
<feature type="sequence variant" evidence="8">
    <original>G</original>
    <variation>R</variation>
    <location>
        <position position="337"/>
    </location>
</feature>
<feature type="sequence variant" evidence="8">
    <original>S</original>
    <variation>N</variation>
    <location>
        <position position="367"/>
    </location>
</feature>
<feature type="sequence variant" evidence="8">
    <original>Q</original>
    <variation>L</variation>
    <location>
        <position position="422"/>
    </location>
</feature>
<feature type="sequence variant" evidence="8">
    <original>I</original>
    <variation>F</variation>
    <location>
        <position position="429"/>
    </location>
</feature>
<feature type="sequence variant" evidence="8">
    <original>D</original>
    <variation>E</variation>
    <location>
        <position position="433"/>
    </location>
</feature>
<accession>O46631</accession>
<accession>O46632</accession>
<proteinExistence type="evidence at transcript level"/>
<comment type="function">
    <text evidence="2 3 4">Immunoglobulin-like cell surface receptor for CD47. Acts as docking protein and induces translocation of PTPN6, PTPN11 and other binding partners from the cytosol to the plasma membrane. Supports adhesion of cerebellar neurons, neurite outgrowth and glial cell attachment. May play a key role in intracellular signaling during synaptogenesis and in synaptic function. Involved in the negative regulation of receptor tyrosine kinase-coupled cellular responses induced by cell adhesion, growth factors or insulin. Mediates negative regulation of phagocytosis, mast cell activation and dendritic cell activation. CD47 binding prevents maturation of immature dendritic cells and inhibits cytokine production by mature dendritic cells. Plays a role in antiviral immunity and limits new world arenavirus infection by decreasing virus internalization (By similarity). Receptor for THBS1 (By similarity). Interaction with THBS1 stimulates phosphorylation of SIRPA (By similarity). In response to THBS1, involved in ROS signaling in non-phagocytic cells, stimulating NADPH oxidase-derived ROS production (By similarity).</text>
</comment>
<comment type="subunit">
    <text evidence="2 4">Binds PTPN11 when tyrosine-phosphorylated, except in macrophages, where it primarily binds PTPN6. Binds GRB2 in vitro. Binds JAK2 irrespective of its phosphorylation status and forms a stable complex. Binds SCAP1 and/or SCAP2. The resulting complex recruits FYB1. Binds FGR and PTK2B (By similarity). Interacts with TRIM2 (By similarity).</text>
</comment>
<comment type="subcellular location">
    <subcellularLocation>
        <location>Membrane</location>
        <topology>Single-pass type I membrane protein</topology>
    </subcellularLocation>
</comment>
<comment type="tissue specificity">
    <text>Highly expressed in spleen macrophages. Detected in skin dendritic cells.</text>
</comment>
<comment type="PTM">
    <text evidence="1">Phosphorylated on tyrosine residues.</text>
</comment>